<evidence type="ECO:0000250" key="1">
    <source>
        <dbReference type="UniProtKB" id="P56785"/>
    </source>
</evidence>
<evidence type="ECO:0000255" key="2"/>
<evidence type="ECO:0000305" key="3"/>
<gene>
    <name evidence="1" type="primary">TIC214</name>
    <name type="synonym">ycf1</name>
</gene>
<dbReference type="EMBL" id="DQ383816">
    <property type="protein sequence ID" value="ABD47280.1"/>
    <property type="molecule type" value="Genomic_DNA"/>
</dbReference>
<dbReference type="GO" id="GO:0009706">
    <property type="term" value="C:chloroplast inner membrane"/>
    <property type="evidence" value="ECO:0007669"/>
    <property type="project" value="UniProtKB-SubCell"/>
</dbReference>
<dbReference type="GO" id="GO:0015031">
    <property type="term" value="P:protein transport"/>
    <property type="evidence" value="ECO:0007669"/>
    <property type="project" value="UniProtKB-KW"/>
</dbReference>
<dbReference type="InterPro" id="IPR008896">
    <property type="entry name" value="TIC214"/>
</dbReference>
<dbReference type="PANTHER" id="PTHR33163:SF40">
    <property type="entry name" value="PROTEIN TIC 214"/>
    <property type="match status" value="1"/>
</dbReference>
<dbReference type="PANTHER" id="PTHR33163">
    <property type="entry name" value="PROTEIN TIC 214-RELATED"/>
    <property type="match status" value="1"/>
</dbReference>
<dbReference type="Pfam" id="PF05758">
    <property type="entry name" value="Ycf1"/>
    <property type="match status" value="3"/>
</dbReference>
<comment type="function">
    <text evidence="1">Involved in protein precursor import into chloroplasts. May be part of an intermediate translocation complex acting as a protein-conducting channel at the inner envelope.</text>
</comment>
<comment type="subunit">
    <text evidence="1">Part of the Tic complex.</text>
</comment>
<comment type="subcellular location">
    <subcellularLocation>
        <location evidence="1">Plastid</location>
        <location evidence="1">Chloroplast inner membrane</location>
        <topology evidence="2">Multi-pass membrane protein</topology>
    </subcellularLocation>
</comment>
<comment type="similarity">
    <text evidence="3">Belongs to the TIC214 family.</text>
</comment>
<protein>
    <recommendedName>
        <fullName evidence="1">Protein TIC 214</fullName>
    </recommendedName>
    <alternativeName>
        <fullName evidence="1">Translocon at the inner envelope membrane of chloroplasts 214</fullName>
        <shortName evidence="1">AtTIC214</shortName>
    </alternativeName>
</protein>
<sequence length="1673" mass="199812">MILKSFLLGNLVSLCMKIINSVVVVGLYYGFLTTFSIGPSYLFLLRAHIMEEGEEGTEKKVSATTGFITGQLIMFISIYYAPLHLALGRPHTITVLALPYLLFHFFCNTHKHFFDYGSTNRNSMRNLSIQCVFLNNLIFQLFNHFILPSSMLARLVNIFMFQCNNKIIFVTSSFVGWIIGHIILMKSIGLLVVWIRKNRSIRKYIRSNKSFVSELANSMSIAGILNILLFVTCVYYLGRMPLPIINKKLNNLEKMDQAKLKNNTPLSYIYKNQEDLYLEILGKKDKEKSFSLFEKPILTFFFDYNRWNRPLRYIRKINKNLSVRKETSQYFFYTCQSDGKKRISFTYPPSLSTFGEMIARRISLSTLEKLSADALYTEWLYTNKEKNNNLNNEFINRIEALETVFLSINILDTKTRLCNVETEKKKNCLVNKKNYLVKMDDPFLTGMYRGRINKLFSSSIINQISIENYEKTYELNKIHYNLLPYPNSREYEHKIDPNSPDYEQKIEKLEKIQAQIDLNNRFIFLWTTIIAKLKGQKNSSRINEIGKKPPRWSYKLINELHQNYKKRRKEQGIIQGLRHQLRTRKYKHIYFLNRSTRTLETLKQSNLNNSNMDKKFNNKDLGFISYLEEPDFRRSLIKGSMRAQRRKLVIWGPYQGNPHSPLFLEKKQDFPFPISDLIKLFLNIKDRLGKKSEFEILNKQSPPKRNNQEDVMEFWETIPHGHKTRGILLLAQSTFRKYIKLPLLIIAKNIVRILLRQSPEWDEDFQDWNREIYLKCSSNGLQFSKTKFPKNWLRGGFQIKILYPFHLKPWHRSKLRLYDSDRDLKQQEDFDSCFLTVLGMETEHPFGPPRKTPSFFEPIFKDIDYKVEIRKLNFRVRRIFKKIKKKEAKAFFFIKQKIKELLKGNKIPLFLPREIYESSETQTEKDSIISNQIIHESLSQIRSTGWTNYSQAEEEMKHRIDRRKTIRNEIEIMKKNKINNAESSQKILKILKIKNIELLVKFFIEKIYIEIFLCIINMRRIPLQLFIQSTKKIIDNDKYINNNETNQERINKTKQNKIDFILSMTIKRAFDNLRNSKRKSDIFFDLSYLSQKYVFFKLSQTQIINFNKLRSILQYNGPSFCLKTEIKDFFGRQGIFHSELRHNKLPNYGMNPWKNWLRGHYQYDLSQITSSRLIPQKWRNRINQCQTSQNKDLNKWYSSEKDQLLDSKKKQNSKVYLLPNKEDNLKKNYRYDLLSYKYIHSETKKNYYIYRSSLETNNNQENSTRNKEKFFSILKNIPSKNYLGKSDIIYMEKNKDRKFLYKINKNIKVEPNKDQIKDKNKDQKKDKIHNNGLFYLPIDSNLEINYKKVFFDWMGMNEKILILNCLISNPKVFFFPKFVRLYHKYKEKPWFIPSKLLLFNLNITSNFSENQNINGKQEEYFLKQEEYFLKQEEDFLKQEEDFLKQEEDFLKQEEDFLKQEEDFFKFRPSNSKQYFELNNQNNIEEYFLESTEKLKIFLKGDFPLQLRWAGRVNQLNQKIMNNIQIYGLLLSLINVRKITISYIQRKEMDLGIMSRNLNLTQLMKTGILILEPARLSLKNDGQFFMYQIISISLVHKSKYQSNQRYQKQENVAKNIDKKNSDLLVPEKILSSRRRRELRILISFNLNLKNNTGVDRNTLVYNENKIKKMESIFG</sequence>
<keyword id="KW-0150">Chloroplast</keyword>
<keyword id="KW-0472">Membrane</keyword>
<keyword id="KW-0934">Plastid</keyword>
<keyword id="KW-1001">Plastid inner membrane</keyword>
<keyword id="KW-0653">Protein transport</keyword>
<keyword id="KW-0812">Transmembrane</keyword>
<keyword id="KW-1133">Transmembrane helix</keyword>
<keyword id="KW-0813">Transport</keyword>
<organism>
    <name type="scientific">Lactuca sativa</name>
    <name type="common">Garden lettuce</name>
    <dbReference type="NCBI Taxonomy" id="4236"/>
    <lineage>
        <taxon>Eukaryota</taxon>
        <taxon>Viridiplantae</taxon>
        <taxon>Streptophyta</taxon>
        <taxon>Embryophyta</taxon>
        <taxon>Tracheophyta</taxon>
        <taxon>Spermatophyta</taxon>
        <taxon>Magnoliopsida</taxon>
        <taxon>eudicotyledons</taxon>
        <taxon>Gunneridae</taxon>
        <taxon>Pentapetalae</taxon>
        <taxon>asterids</taxon>
        <taxon>campanulids</taxon>
        <taxon>Asterales</taxon>
        <taxon>Asteraceae</taxon>
        <taxon>Cichorioideae</taxon>
        <taxon>Cichorieae</taxon>
        <taxon>Lactucinae</taxon>
        <taxon>Lactuca</taxon>
    </lineage>
</organism>
<feature type="chain" id="PRO_0000262613" description="Protein TIC 214">
    <location>
        <begin position="1"/>
        <end position="1673"/>
    </location>
</feature>
<feature type="transmembrane region" description="Helical" evidence="2">
    <location>
        <begin position="18"/>
        <end position="38"/>
    </location>
</feature>
<feature type="transmembrane region" description="Helical" evidence="2">
    <location>
        <begin position="67"/>
        <end position="87"/>
    </location>
</feature>
<feature type="transmembrane region" description="Helical" evidence="2">
    <location>
        <begin position="90"/>
        <end position="110"/>
    </location>
</feature>
<feature type="transmembrane region" description="Helical" evidence="2">
    <location>
        <begin position="127"/>
        <end position="147"/>
    </location>
</feature>
<feature type="transmembrane region" description="Helical" evidence="2">
    <location>
        <begin position="175"/>
        <end position="195"/>
    </location>
</feature>
<feature type="transmembrane region" description="Helical" evidence="2">
    <location>
        <begin position="218"/>
        <end position="238"/>
    </location>
</feature>
<proteinExistence type="inferred from homology"/>
<geneLocation type="chloroplast"/>
<reference key="1">
    <citation type="submission" date="2006-01" db="EMBL/GenBank/DDBJ databases">
        <title>A comparison of the first two published chloroplast genomes in Asteraceae: Lactuca and Helianthus.</title>
        <authorList>
            <person name="Timme R.E."/>
            <person name="Kuehl J.V."/>
            <person name="Boore J.L."/>
            <person name="Jansen R.K."/>
        </authorList>
    </citation>
    <scope>NUCLEOTIDE SEQUENCE [LARGE SCALE GENOMIC DNA]</scope>
    <source>
        <strain>cv. Salinas</strain>
    </source>
</reference>
<name>TI214_LACSA</name>
<accession>Q1KXH4</accession>